<organism>
    <name type="scientific">Escherichia coli O157:H7</name>
    <dbReference type="NCBI Taxonomy" id="83334"/>
    <lineage>
        <taxon>Bacteria</taxon>
        <taxon>Pseudomonadati</taxon>
        <taxon>Pseudomonadota</taxon>
        <taxon>Gammaproteobacteria</taxon>
        <taxon>Enterobacterales</taxon>
        <taxon>Enterobacteriaceae</taxon>
        <taxon>Escherichia</taxon>
    </lineage>
</organism>
<proteinExistence type="inferred from homology"/>
<sequence>MAKGQSLQDPFLNALRRERVPVSIYLVNGIKLQGQIESFDQFVILLKNTVSQMVYKHAISTVVPSRPVSHHSNNAGGGTSSNYHHGSSAQNTSAQQDSEETE</sequence>
<protein>
    <recommendedName>
        <fullName evidence="2">RNA-binding protein Hfq</fullName>
    </recommendedName>
</protein>
<feature type="initiator methionine" description="Removed" evidence="1">
    <location>
        <position position="1"/>
    </location>
</feature>
<feature type="chain" id="PRO_0000095603" description="RNA-binding protein Hfq">
    <location>
        <begin position="2"/>
        <end position="102"/>
    </location>
</feature>
<feature type="domain" description="Sm" evidence="3">
    <location>
        <begin position="9"/>
        <end position="68"/>
    </location>
</feature>
<feature type="region of interest" description="Disordered" evidence="4">
    <location>
        <begin position="63"/>
        <end position="102"/>
    </location>
</feature>
<feature type="compositionally biased region" description="Polar residues" evidence="4">
    <location>
        <begin position="70"/>
        <end position="96"/>
    </location>
</feature>
<comment type="function">
    <text evidence="2">RNA chaperone that binds small regulatory RNA (sRNAs) and mRNAs to facilitate mRNA translational regulation in response to envelope stress, environmental stress and changes in metabolite concentrations. Also binds with high specificity to tRNAs.</text>
</comment>
<comment type="subunit">
    <text evidence="2">Homohexamer.</text>
</comment>
<comment type="similarity">
    <text evidence="2">Belongs to the Hfq family.</text>
</comment>
<accession>P0A6X5</accession>
<accession>O24728</accession>
<accession>P25521</accession>
<accession>Q47383</accession>
<name>HFQ_ECO57</name>
<evidence type="ECO:0000250" key="1"/>
<evidence type="ECO:0000255" key="2">
    <source>
        <dbReference type="HAMAP-Rule" id="MF_00436"/>
    </source>
</evidence>
<evidence type="ECO:0000255" key="3">
    <source>
        <dbReference type="PROSITE-ProRule" id="PRU01346"/>
    </source>
</evidence>
<evidence type="ECO:0000256" key="4">
    <source>
        <dbReference type="SAM" id="MobiDB-lite"/>
    </source>
</evidence>
<keyword id="KW-1185">Reference proteome</keyword>
<keyword id="KW-0694">RNA-binding</keyword>
<keyword id="KW-0346">Stress response</keyword>
<gene>
    <name evidence="2" type="primary">hfq</name>
    <name type="ordered locus">Z5779</name>
    <name type="ordered locus">ECs5148</name>
</gene>
<reference key="1">
    <citation type="journal article" date="2001" name="Nature">
        <title>Genome sequence of enterohaemorrhagic Escherichia coli O157:H7.</title>
        <authorList>
            <person name="Perna N.T."/>
            <person name="Plunkett G. III"/>
            <person name="Burland V."/>
            <person name="Mau B."/>
            <person name="Glasner J.D."/>
            <person name="Rose D.J."/>
            <person name="Mayhew G.F."/>
            <person name="Evans P.S."/>
            <person name="Gregor J."/>
            <person name="Kirkpatrick H.A."/>
            <person name="Posfai G."/>
            <person name="Hackett J."/>
            <person name="Klink S."/>
            <person name="Boutin A."/>
            <person name="Shao Y."/>
            <person name="Miller L."/>
            <person name="Grotbeck E.J."/>
            <person name="Davis N.W."/>
            <person name="Lim A."/>
            <person name="Dimalanta E.T."/>
            <person name="Potamousis K."/>
            <person name="Apodaca J."/>
            <person name="Anantharaman T.S."/>
            <person name="Lin J."/>
            <person name="Yen G."/>
            <person name="Schwartz D.C."/>
            <person name="Welch R.A."/>
            <person name="Blattner F.R."/>
        </authorList>
    </citation>
    <scope>NUCLEOTIDE SEQUENCE [LARGE SCALE GENOMIC DNA]</scope>
    <source>
        <strain>O157:H7 / EDL933 / ATCC 700927 / EHEC</strain>
    </source>
</reference>
<reference key="2">
    <citation type="journal article" date="2001" name="DNA Res.">
        <title>Complete genome sequence of enterohemorrhagic Escherichia coli O157:H7 and genomic comparison with a laboratory strain K-12.</title>
        <authorList>
            <person name="Hayashi T."/>
            <person name="Makino K."/>
            <person name="Ohnishi M."/>
            <person name="Kurokawa K."/>
            <person name="Ishii K."/>
            <person name="Yokoyama K."/>
            <person name="Han C.-G."/>
            <person name="Ohtsubo E."/>
            <person name="Nakayama K."/>
            <person name="Murata T."/>
            <person name="Tanaka M."/>
            <person name="Tobe T."/>
            <person name="Iida T."/>
            <person name="Takami H."/>
            <person name="Honda T."/>
            <person name="Sasakawa C."/>
            <person name="Ogasawara N."/>
            <person name="Yasunaga T."/>
            <person name="Kuhara S."/>
            <person name="Shiba T."/>
            <person name="Hattori M."/>
            <person name="Shinagawa H."/>
        </authorList>
    </citation>
    <scope>NUCLEOTIDE SEQUENCE [LARGE SCALE GENOMIC DNA]</scope>
    <source>
        <strain>O157:H7 / Sakai / RIMD 0509952 / EHEC</strain>
    </source>
</reference>
<dbReference type="EMBL" id="AE005174">
    <property type="protein sequence ID" value="AAG59368.1"/>
    <property type="molecule type" value="Genomic_DNA"/>
</dbReference>
<dbReference type="EMBL" id="BA000007">
    <property type="protein sequence ID" value="BAB38571.1"/>
    <property type="molecule type" value="Genomic_DNA"/>
</dbReference>
<dbReference type="PIR" id="D86113">
    <property type="entry name" value="D86113"/>
</dbReference>
<dbReference type="PIR" id="D91272">
    <property type="entry name" value="D91272"/>
</dbReference>
<dbReference type="RefSeq" id="NP_313175.1">
    <property type="nucleotide sequence ID" value="NC_002695.1"/>
</dbReference>
<dbReference type="RefSeq" id="WP_001051883.1">
    <property type="nucleotide sequence ID" value="NZ_VOAI01000008.1"/>
</dbReference>
<dbReference type="SMR" id="P0A6X5"/>
<dbReference type="STRING" id="155864.Z5779"/>
<dbReference type="GeneID" id="914061"/>
<dbReference type="GeneID" id="93777649"/>
<dbReference type="KEGG" id="ece:Z5779"/>
<dbReference type="KEGG" id="ecs:ECs_5148"/>
<dbReference type="PATRIC" id="fig|386585.9.peg.5381"/>
<dbReference type="eggNOG" id="COG1923">
    <property type="taxonomic scope" value="Bacteria"/>
</dbReference>
<dbReference type="HOGENOM" id="CLU_113688_2_1_6"/>
<dbReference type="OMA" id="QQMVYKH"/>
<dbReference type="Proteomes" id="UP000000558">
    <property type="component" value="Chromosome"/>
</dbReference>
<dbReference type="Proteomes" id="UP000002519">
    <property type="component" value="Chromosome"/>
</dbReference>
<dbReference type="GO" id="GO:0005829">
    <property type="term" value="C:cytosol"/>
    <property type="evidence" value="ECO:0007669"/>
    <property type="project" value="TreeGrafter"/>
</dbReference>
<dbReference type="GO" id="GO:0003723">
    <property type="term" value="F:RNA binding"/>
    <property type="evidence" value="ECO:0007669"/>
    <property type="project" value="UniProtKB-UniRule"/>
</dbReference>
<dbReference type="GO" id="GO:0006355">
    <property type="term" value="P:regulation of DNA-templated transcription"/>
    <property type="evidence" value="ECO:0007669"/>
    <property type="project" value="InterPro"/>
</dbReference>
<dbReference type="GO" id="GO:0043487">
    <property type="term" value="P:regulation of RNA stability"/>
    <property type="evidence" value="ECO:0007669"/>
    <property type="project" value="TreeGrafter"/>
</dbReference>
<dbReference type="GO" id="GO:0045974">
    <property type="term" value="P:regulation of translation, ncRNA-mediated"/>
    <property type="evidence" value="ECO:0007669"/>
    <property type="project" value="TreeGrafter"/>
</dbReference>
<dbReference type="CDD" id="cd01716">
    <property type="entry name" value="Hfq"/>
    <property type="match status" value="1"/>
</dbReference>
<dbReference type="FunFam" id="2.30.30.100:FF:000001">
    <property type="entry name" value="RNA-binding protein Hfq"/>
    <property type="match status" value="1"/>
</dbReference>
<dbReference type="Gene3D" id="2.30.30.100">
    <property type="match status" value="1"/>
</dbReference>
<dbReference type="HAMAP" id="MF_00436">
    <property type="entry name" value="Hfq"/>
    <property type="match status" value="1"/>
</dbReference>
<dbReference type="InterPro" id="IPR005001">
    <property type="entry name" value="Hfq"/>
</dbReference>
<dbReference type="InterPro" id="IPR010920">
    <property type="entry name" value="LSM_dom_sf"/>
</dbReference>
<dbReference type="InterPro" id="IPR047575">
    <property type="entry name" value="Sm"/>
</dbReference>
<dbReference type="NCBIfam" id="TIGR02383">
    <property type="entry name" value="Hfq"/>
    <property type="match status" value="1"/>
</dbReference>
<dbReference type="NCBIfam" id="NF001602">
    <property type="entry name" value="PRK00395.1"/>
    <property type="match status" value="1"/>
</dbReference>
<dbReference type="PANTHER" id="PTHR34772">
    <property type="entry name" value="RNA-BINDING PROTEIN HFQ"/>
    <property type="match status" value="1"/>
</dbReference>
<dbReference type="PANTHER" id="PTHR34772:SF1">
    <property type="entry name" value="RNA-BINDING PROTEIN HFQ"/>
    <property type="match status" value="1"/>
</dbReference>
<dbReference type="Pfam" id="PF17209">
    <property type="entry name" value="Hfq"/>
    <property type="match status" value="1"/>
</dbReference>
<dbReference type="SUPFAM" id="SSF50182">
    <property type="entry name" value="Sm-like ribonucleoproteins"/>
    <property type="match status" value="1"/>
</dbReference>
<dbReference type="PROSITE" id="PS52002">
    <property type="entry name" value="SM"/>
    <property type="match status" value="1"/>
</dbReference>